<sequence>MVKATKAEKKIAYDTKLCQLIDEYTQILVVAADNVGSTQLQNIRKGLRGDSVVLMGKNTMMKRSVRIHSENSGNTAILNLLPLLQGNVGLIFTKGDLKEVSEEVAKYKVGAPARVGLVAPIDVVVQPGNTGLDPSQTSFFQVLNIPTKINKGTVEIITPVELIKQGDKVGSSEAALLAKLGIRPFSYGLVVQSVYDNGSVFSPEVLDLTEDQLVEKFASGISMVTSLALAVSYPTLAAAPHMFINAYKNALAIAVATDYTFPQAEKVKEFLKDPSKFVVAAAAVSADAGGGSAQAGAAAKVEEKKEESDEEDYEGGFGLFDEE</sequence>
<feature type="chain" id="PRO_0000154777" description="Large ribosomal subunit protein uL10x">
    <location>
        <begin position="1"/>
        <end position="323"/>
    </location>
</feature>
<feature type="region of interest" description="Disordered" evidence="2">
    <location>
        <begin position="287"/>
        <end position="323"/>
    </location>
</feature>
<feature type="compositionally biased region" description="Acidic residues" evidence="2">
    <location>
        <begin position="308"/>
        <end position="323"/>
    </location>
</feature>
<feature type="modified residue" description="Phosphoserine" evidence="5 6">
    <location>
        <position position="308"/>
    </location>
</feature>
<feature type="modified residue" description="Phosphotyrosine" evidence="5">
    <location>
        <position position="313"/>
    </location>
</feature>
<feature type="sequence conflict" description="In Ref. 4; AAM65265." evidence="4" ref="4">
    <original>D</original>
    <variation>N</variation>
    <location>
        <position position="258"/>
    </location>
</feature>
<organism>
    <name type="scientific">Arabidopsis thaliana</name>
    <name type="common">Mouse-ear cress</name>
    <dbReference type="NCBI Taxonomy" id="3702"/>
    <lineage>
        <taxon>Eukaryota</taxon>
        <taxon>Viridiplantae</taxon>
        <taxon>Streptophyta</taxon>
        <taxon>Embryophyta</taxon>
        <taxon>Tracheophyta</taxon>
        <taxon>Spermatophyta</taxon>
        <taxon>Magnoliopsida</taxon>
        <taxon>eudicotyledons</taxon>
        <taxon>Gunneridae</taxon>
        <taxon>Pentapetalae</taxon>
        <taxon>rosids</taxon>
        <taxon>malvids</taxon>
        <taxon>Brassicales</taxon>
        <taxon>Brassicaceae</taxon>
        <taxon>Camelineae</taxon>
        <taxon>Arabidopsis</taxon>
    </lineage>
</organism>
<keyword id="KW-0597">Phosphoprotein</keyword>
<keyword id="KW-1185">Reference proteome</keyword>
<keyword id="KW-0687">Ribonucleoprotein</keyword>
<keyword id="KW-0689">Ribosomal protein</keyword>
<reference key="1">
    <citation type="journal article" date="2000" name="Nature">
        <title>Sequence and analysis of chromosome 3 of the plant Arabidopsis thaliana.</title>
        <authorList>
            <person name="Salanoubat M."/>
            <person name="Lemcke K."/>
            <person name="Rieger M."/>
            <person name="Ansorge W."/>
            <person name="Unseld M."/>
            <person name="Fartmann B."/>
            <person name="Valle G."/>
            <person name="Bloecker H."/>
            <person name="Perez-Alonso M."/>
            <person name="Obermaier B."/>
            <person name="Delseny M."/>
            <person name="Boutry M."/>
            <person name="Grivell L.A."/>
            <person name="Mache R."/>
            <person name="Puigdomenech P."/>
            <person name="De Simone V."/>
            <person name="Choisne N."/>
            <person name="Artiguenave F."/>
            <person name="Robert C."/>
            <person name="Brottier P."/>
            <person name="Wincker P."/>
            <person name="Cattolico L."/>
            <person name="Weissenbach J."/>
            <person name="Saurin W."/>
            <person name="Quetier F."/>
            <person name="Schaefer M."/>
            <person name="Mueller-Auer S."/>
            <person name="Gabel C."/>
            <person name="Fuchs M."/>
            <person name="Benes V."/>
            <person name="Wurmbach E."/>
            <person name="Drzonek H."/>
            <person name="Erfle H."/>
            <person name="Jordan N."/>
            <person name="Bangert S."/>
            <person name="Wiedelmann R."/>
            <person name="Kranz H."/>
            <person name="Voss H."/>
            <person name="Holland R."/>
            <person name="Brandt P."/>
            <person name="Nyakatura G."/>
            <person name="Vezzi A."/>
            <person name="D'Angelo M."/>
            <person name="Pallavicini A."/>
            <person name="Toppo S."/>
            <person name="Simionati B."/>
            <person name="Conrad A."/>
            <person name="Hornischer K."/>
            <person name="Kauer G."/>
            <person name="Loehnert T.-H."/>
            <person name="Nordsiek G."/>
            <person name="Reichelt J."/>
            <person name="Scharfe M."/>
            <person name="Schoen O."/>
            <person name="Bargues M."/>
            <person name="Terol J."/>
            <person name="Climent J."/>
            <person name="Navarro P."/>
            <person name="Collado C."/>
            <person name="Perez-Perez A."/>
            <person name="Ottenwaelder B."/>
            <person name="Duchemin D."/>
            <person name="Cooke R."/>
            <person name="Laudie M."/>
            <person name="Berger-Llauro C."/>
            <person name="Purnelle B."/>
            <person name="Masuy D."/>
            <person name="de Haan M."/>
            <person name="Maarse A.C."/>
            <person name="Alcaraz J.-P."/>
            <person name="Cottet A."/>
            <person name="Casacuberta E."/>
            <person name="Monfort A."/>
            <person name="Argiriou A."/>
            <person name="Flores M."/>
            <person name="Liguori R."/>
            <person name="Vitale D."/>
            <person name="Mannhaupt G."/>
            <person name="Haase D."/>
            <person name="Schoof H."/>
            <person name="Rudd S."/>
            <person name="Zaccaria P."/>
            <person name="Mewes H.-W."/>
            <person name="Mayer K.F.X."/>
            <person name="Kaul S."/>
            <person name="Town C.D."/>
            <person name="Koo H.L."/>
            <person name="Tallon L.J."/>
            <person name="Jenkins J."/>
            <person name="Rooney T."/>
            <person name="Rizzo M."/>
            <person name="Walts A."/>
            <person name="Utterback T."/>
            <person name="Fujii C.Y."/>
            <person name="Shea T.P."/>
            <person name="Creasy T.H."/>
            <person name="Haas B."/>
            <person name="Maiti R."/>
            <person name="Wu D."/>
            <person name="Peterson J."/>
            <person name="Van Aken S."/>
            <person name="Pai G."/>
            <person name="Militscher J."/>
            <person name="Sellers P."/>
            <person name="Gill J.E."/>
            <person name="Feldblyum T.V."/>
            <person name="Preuss D."/>
            <person name="Lin X."/>
            <person name="Nierman W.C."/>
            <person name="Salzberg S.L."/>
            <person name="White O."/>
            <person name="Venter J.C."/>
            <person name="Fraser C.M."/>
            <person name="Kaneko T."/>
            <person name="Nakamura Y."/>
            <person name="Sato S."/>
            <person name="Kato T."/>
            <person name="Asamizu E."/>
            <person name="Sasamoto S."/>
            <person name="Kimura T."/>
            <person name="Idesawa K."/>
            <person name="Kawashima K."/>
            <person name="Kishida Y."/>
            <person name="Kiyokawa C."/>
            <person name="Kohara M."/>
            <person name="Matsumoto M."/>
            <person name="Matsuno A."/>
            <person name="Muraki A."/>
            <person name="Nakayama S."/>
            <person name="Nakazaki N."/>
            <person name="Shinpo S."/>
            <person name="Takeuchi C."/>
            <person name="Wada T."/>
            <person name="Watanabe A."/>
            <person name="Yamada M."/>
            <person name="Yasuda M."/>
            <person name="Tabata S."/>
        </authorList>
    </citation>
    <scope>NUCLEOTIDE SEQUENCE [LARGE SCALE GENOMIC DNA]</scope>
    <source>
        <strain>cv. Columbia</strain>
    </source>
</reference>
<reference key="2">
    <citation type="journal article" date="2017" name="Plant J.">
        <title>Araport11: a complete reannotation of the Arabidopsis thaliana reference genome.</title>
        <authorList>
            <person name="Cheng C.Y."/>
            <person name="Krishnakumar V."/>
            <person name="Chan A.P."/>
            <person name="Thibaud-Nissen F."/>
            <person name="Schobel S."/>
            <person name="Town C.D."/>
        </authorList>
    </citation>
    <scope>GENOME REANNOTATION</scope>
    <source>
        <strain>cv. Columbia</strain>
    </source>
</reference>
<reference key="3">
    <citation type="journal article" date="2003" name="Science">
        <title>Empirical analysis of transcriptional activity in the Arabidopsis genome.</title>
        <authorList>
            <person name="Yamada K."/>
            <person name="Lim J."/>
            <person name="Dale J.M."/>
            <person name="Chen H."/>
            <person name="Shinn P."/>
            <person name="Palm C.J."/>
            <person name="Southwick A.M."/>
            <person name="Wu H.C."/>
            <person name="Kim C.J."/>
            <person name="Nguyen M."/>
            <person name="Pham P.K."/>
            <person name="Cheuk R.F."/>
            <person name="Karlin-Newmann G."/>
            <person name="Liu S.X."/>
            <person name="Lam B."/>
            <person name="Sakano H."/>
            <person name="Wu T."/>
            <person name="Yu G."/>
            <person name="Miranda M."/>
            <person name="Quach H.L."/>
            <person name="Tripp M."/>
            <person name="Chang C.H."/>
            <person name="Lee J.M."/>
            <person name="Toriumi M.J."/>
            <person name="Chan M.M."/>
            <person name="Tang C.C."/>
            <person name="Onodera C.S."/>
            <person name="Deng J.M."/>
            <person name="Akiyama K."/>
            <person name="Ansari Y."/>
            <person name="Arakawa T."/>
            <person name="Banh J."/>
            <person name="Banno F."/>
            <person name="Bowser L."/>
            <person name="Brooks S.Y."/>
            <person name="Carninci P."/>
            <person name="Chao Q."/>
            <person name="Choy N."/>
            <person name="Enju A."/>
            <person name="Goldsmith A.D."/>
            <person name="Gurjal M."/>
            <person name="Hansen N.F."/>
            <person name="Hayashizaki Y."/>
            <person name="Johnson-Hopson C."/>
            <person name="Hsuan V.W."/>
            <person name="Iida K."/>
            <person name="Karnes M."/>
            <person name="Khan S."/>
            <person name="Koesema E."/>
            <person name="Ishida J."/>
            <person name="Jiang P.X."/>
            <person name="Jones T."/>
            <person name="Kawai J."/>
            <person name="Kamiya A."/>
            <person name="Meyers C."/>
            <person name="Nakajima M."/>
            <person name="Narusaka M."/>
            <person name="Seki M."/>
            <person name="Sakurai T."/>
            <person name="Satou M."/>
            <person name="Tamse R."/>
            <person name="Vaysberg M."/>
            <person name="Wallender E.K."/>
            <person name="Wong C."/>
            <person name="Yamamura Y."/>
            <person name="Yuan S."/>
            <person name="Shinozaki K."/>
            <person name="Davis R.W."/>
            <person name="Theologis A."/>
            <person name="Ecker J.R."/>
        </authorList>
    </citation>
    <scope>NUCLEOTIDE SEQUENCE [LARGE SCALE MRNA]</scope>
    <source>
        <strain>cv. Columbia</strain>
    </source>
</reference>
<reference key="4">
    <citation type="submission" date="2002-03" db="EMBL/GenBank/DDBJ databases">
        <title>Full-length cDNA from Arabidopsis thaliana.</title>
        <authorList>
            <person name="Brover V.V."/>
            <person name="Troukhan M.E."/>
            <person name="Alexandrov N.A."/>
            <person name="Lu Y.-P."/>
            <person name="Flavell R.B."/>
            <person name="Feldmann K.A."/>
        </authorList>
    </citation>
    <scope>NUCLEOTIDE SEQUENCE [LARGE SCALE MRNA]</scope>
</reference>
<reference key="5">
    <citation type="journal article" date="2001" name="Plant Physiol.">
        <title>The organization of cytoplasmic ribosomal protein genes in the Arabidopsis genome.</title>
        <authorList>
            <person name="Barakat A."/>
            <person name="Szick-Miranda K."/>
            <person name="Chang I.-F."/>
            <person name="Guyot R."/>
            <person name="Blanc G."/>
            <person name="Cooke R."/>
            <person name="Delseny M."/>
            <person name="Bailey-Serres J."/>
        </authorList>
    </citation>
    <scope>GENE FAMILY ORGANIZATION</scope>
    <scope>NOMENCLATURE</scope>
</reference>
<reference key="6">
    <citation type="journal article" date="2009" name="J. Proteomics">
        <title>Phosphoproteomic analysis of nuclei-enriched fractions from Arabidopsis thaliana.</title>
        <authorList>
            <person name="Jones A.M.E."/>
            <person name="MacLean D."/>
            <person name="Studholme D.J."/>
            <person name="Serna-Sanz A."/>
            <person name="Andreasson E."/>
            <person name="Rathjen J.P."/>
            <person name="Peck S.C."/>
        </authorList>
    </citation>
    <scope>PHOSPHORYLATION [LARGE SCALE ANALYSIS] AT SER-308 AND TYR-313</scope>
    <scope>IDENTIFICATION BY MASS SPECTROMETRY [LARGE SCALE ANALYSIS]</scope>
    <source>
        <strain>cv. Columbia</strain>
    </source>
</reference>
<reference key="7">
    <citation type="journal article" date="2009" name="Plant Physiol.">
        <title>Large-scale Arabidopsis phosphoproteome profiling reveals novel chloroplast kinase substrates and phosphorylation networks.</title>
        <authorList>
            <person name="Reiland S."/>
            <person name="Messerli G."/>
            <person name="Baerenfaller K."/>
            <person name="Gerrits B."/>
            <person name="Endler A."/>
            <person name="Grossmann J."/>
            <person name="Gruissem W."/>
            <person name="Baginsky S."/>
        </authorList>
    </citation>
    <scope>PHOSPHORYLATION [LARGE SCALE ANALYSIS] AT SER-308</scope>
    <scope>IDENTIFICATION BY MASS SPECTROMETRY [LARGE SCALE ANALYSIS]</scope>
</reference>
<reference key="8">
    <citation type="journal article" date="2023" name="Plant Cell">
        <title>An updated nomenclature for plant ribosomal protein genes.</title>
        <authorList>
            <person name="Scarpin M.R."/>
            <person name="Busche M."/>
            <person name="Martinez R.E."/>
            <person name="Harper L.C."/>
            <person name="Reiser L."/>
            <person name="Szakonyi D."/>
            <person name="Merchante C."/>
            <person name="Lan T."/>
            <person name="Xiong W."/>
            <person name="Mo B."/>
            <person name="Tang G."/>
            <person name="Chen X."/>
            <person name="Bailey-Serres J."/>
            <person name="Browning K.S."/>
            <person name="Brunkard J.O."/>
        </authorList>
    </citation>
    <scope>NOMENCLATURE</scope>
</reference>
<dbReference type="EMBL" id="AC073395">
    <property type="protein sequence ID" value="AAG50973.1"/>
    <property type="molecule type" value="Genomic_DNA"/>
</dbReference>
<dbReference type="EMBL" id="CP002686">
    <property type="protein sequence ID" value="AEE75020.1"/>
    <property type="molecule type" value="Genomic_DNA"/>
</dbReference>
<dbReference type="EMBL" id="AY056150">
    <property type="protein sequence ID" value="AAL07229.1"/>
    <property type="molecule type" value="mRNA"/>
</dbReference>
<dbReference type="EMBL" id="AY091201">
    <property type="protein sequence ID" value="AAM14140.1"/>
    <property type="molecule type" value="mRNA"/>
</dbReference>
<dbReference type="EMBL" id="AY087728">
    <property type="protein sequence ID" value="AAM65265.1"/>
    <property type="molecule type" value="mRNA"/>
</dbReference>
<dbReference type="RefSeq" id="NP_187734.1">
    <property type="nucleotide sequence ID" value="NM_111960.4"/>
</dbReference>
<dbReference type="SMR" id="P57691"/>
<dbReference type="BioGRID" id="5630">
    <property type="interactions" value="128"/>
</dbReference>
<dbReference type="FunCoup" id="P57691">
    <property type="interactions" value="3395"/>
</dbReference>
<dbReference type="STRING" id="3702.P57691"/>
<dbReference type="iPTMnet" id="P57691"/>
<dbReference type="PaxDb" id="3702-AT3G11250.1"/>
<dbReference type="ProteomicsDB" id="228085"/>
<dbReference type="EnsemblPlants" id="AT3G11250.1">
    <property type="protein sequence ID" value="AT3G11250.1"/>
    <property type="gene ID" value="AT3G11250"/>
</dbReference>
<dbReference type="GeneID" id="820296"/>
<dbReference type="Gramene" id="AT3G11250.1">
    <property type="protein sequence ID" value="AT3G11250.1"/>
    <property type="gene ID" value="AT3G11250"/>
</dbReference>
<dbReference type="KEGG" id="ath:AT3G11250"/>
<dbReference type="Araport" id="AT3G11250"/>
<dbReference type="TAIR" id="AT3G11250"/>
<dbReference type="eggNOG" id="KOG0815">
    <property type="taxonomic scope" value="Eukaryota"/>
</dbReference>
<dbReference type="HOGENOM" id="CLU_053173_1_1_1"/>
<dbReference type="InParanoid" id="P57691"/>
<dbReference type="OMA" id="MIPAQNT"/>
<dbReference type="PhylomeDB" id="P57691"/>
<dbReference type="CD-CODE" id="4299E36E">
    <property type="entry name" value="Nucleolus"/>
</dbReference>
<dbReference type="PRO" id="PR:P57691"/>
<dbReference type="Proteomes" id="UP000006548">
    <property type="component" value="Chromosome 3"/>
</dbReference>
<dbReference type="ExpressionAtlas" id="P57691">
    <property type="expression patterns" value="baseline and differential"/>
</dbReference>
<dbReference type="GO" id="GO:0005829">
    <property type="term" value="C:cytosol"/>
    <property type="evidence" value="ECO:0007005"/>
    <property type="project" value="TAIR"/>
</dbReference>
<dbReference type="GO" id="GO:0022626">
    <property type="term" value="C:cytosolic ribosome"/>
    <property type="evidence" value="ECO:0007005"/>
    <property type="project" value="TAIR"/>
</dbReference>
<dbReference type="GO" id="GO:1990904">
    <property type="term" value="C:ribonucleoprotein complex"/>
    <property type="evidence" value="ECO:0007669"/>
    <property type="project" value="UniProtKB-KW"/>
</dbReference>
<dbReference type="GO" id="GO:0003729">
    <property type="term" value="F:mRNA binding"/>
    <property type="evidence" value="ECO:0000314"/>
    <property type="project" value="TAIR"/>
</dbReference>
<dbReference type="GO" id="GO:0003735">
    <property type="term" value="F:structural constituent of ribosome"/>
    <property type="evidence" value="ECO:0000314"/>
    <property type="project" value="CAFA"/>
</dbReference>
<dbReference type="GO" id="GO:0042254">
    <property type="term" value="P:ribosome biogenesis"/>
    <property type="evidence" value="ECO:0007669"/>
    <property type="project" value="InterPro"/>
</dbReference>
<dbReference type="CDD" id="cd05795">
    <property type="entry name" value="Ribosomal_P0_L10e"/>
    <property type="match status" value="1"/>
</dbReference>
<dbReference type="FunFam" id="3.90.105.20:FF:000001">
    <property type="entry name" value="60S acidic ribosomal protein P0"/>
    <property type="match status" value="1"/>
</dbReference>
<dbReference type="Gene3D" id="3.30.70.1730">
    <property type="match status" value="1"/>
</dbReference>
<dbReference type="Gene3D" id="3.90.105.20">
    <property type="match status" value="1"/>
</dbReference>
<dbReference type="InterPro" id="IPR050323">
    <property type="entry name" value="Ribosomal_protein_uL10"/>
</dbReference>
<dbReference type="InterPro" id="IPR001790">
    <property type="entry name" value="Ribosomal_uL10"/>
</dbReference>
<dbReference type="InterPro" id="IPR040637">
    <property type="entry name" value="Ribosomal_uL10-like_insert"/>
</dbReference>
<dbReference type="InterPro" id="IPR043164">
    <property type="entry name" value="Ribosomal_uL10-like_insert_sf"/>
</dbReference>
<dbReference type="InterPro" id="IPR043141">
    <property type="entry name" value="Ribosomal_uL10-like_sf"/>
</dbReference>
<dbReference type="InterPro" id="IPR030670">
    <property type="entry name" value="uL10_eukaryotes"/>
</dbReference>
<dbReference type="PANTHER" id="PTHR45699">
    <property type="entry name" value="60S ACIDIC RIBOSOMAL PROTEIN P0"/>
    <property type="match status" value="1"/>
</dbReference>
<dbReference type="PANTHER" id="PTHR45699:SF25">
    <property type="entry name" value="LARGE RIBOSOMAL SUBUNIT PROTEIN UL10X-RELATED"/>
    <property type="match status" value="1"/>
</dbReference>
<dbReference type="Pfam" id="PF00428">
    <property type="entry name" value="Ribosomal_60s"/>
    <property type="match status" value="1"/>
</dbReference>
<dbReference type="Pfam" id="PF00466">
    <property type="entry name" value="Ribosomal_L10"/>
    <property type="match status" value="1"/>
</dbReference>
<dbReference type="Pfam" id="PF17777">
    <property type="entry name" value="RL10P_insert"/>
    <property type="match status" value="1"/>
</dbReference>
<dbReference type="PIRSF" id="PIRSF039087">
    <property type="entry name" value="L10E"/>
    <property type="match status" value="1"/>
</dbReference>
<dbReference type="SUPFAM" id="SSF160369">
    <property type="entry name" value="Ribosomal protein L10-like"/>
    <property type="match status" value="1"/>
</dbReference>
<protein>
    <recommendedName>
        <fullName evidence="3">Large ribosomal subunit protein uL10x</fullName>
    </recommendedName>
    <alternativeName>
        <fullName>60S acidic ribosomal protein P0-3</fullName>
    </alternativeName>
</protein>
<proteinExistence type="evidence at protein level"/>
<comment type="function">
    <text>Ribosomal protein P0 is the functional equivalent of E.coli protein L10.</text>
</comment>
<comment type="subunit">
    <text evidence="1">P0 forms a pentameric complex by interaction with dimers of P1 and P2.</text>
</comment>
<comment type="similarity">
    <text evidence="4">Belongs to the universal ribosomal protein uL10 family.</text>
</comment>
<gene>
    <name type="primary">RPP0C</name>
    <name type="ordered locus">At3g11250</name>
    <name type="ORF">F11B9.17</name>
    <name type="ORF">F11B9_119</name>
</gene>
<evidence type="ECO:0000250" key="1"/>
<evidence type="ECO:0000256" key="2">
    <source>
        <dbReference type="SAM" id="MobiDB-lite"/>
    </source>
</evidence>
<evidence type="ECO:0000303" key="3">
    <source>
    </source>
</evidence>
<evidence type="ECO:0000305" key="4"/>
<evidence type="ECO:0007744" key="5">
    <source>
    </source>
</evidence>
<evidence type="ECO:0007744" key="6">
    <source>
    </source>
</evidence>
<accession>P57691</accession>
<accession>Q8LAM3</accession>
<name>RLA03_ARATH</name>